<organism>
    <name type="scientific">Angiopteris evecta</name>
    <name type="common">Mule's foot fern</name>
    <name type="synonym">Polypodium evectum</name>
    <dbReference type="NCBI Taxonomy" id="13825"/>
    <lineage>
        <taxon>Eukaryota</taxon>
        <taxon>Viridiplantae</taxon>
        <taxon>Streptophyta</taxon>
        <taxon>Embryophyta</taxon>
        <taxon>Tracheophyta</taxon>
        <taxon>Polypodiopsida</taxon>
        <taxon>Marattiidae</taxon>
        <taxon>Marattiales</taxon>
        <taxon>Marattiaceae</taxon>
        <taxon>Angiopteris</taxon>
    </lineage>
</organism>
<accession>A2T356</accession>
<dbReference type="EMBL" id="DQ821119">
    <property type="protein sequence ID" value="ABG79623.1"/>
    <property type="molecule type" value="Genomic_DNA"/>
</dbReference>
<dbReference type="RefSeq" id="YP_001023724.1">
    <property type="nucleotide sequence ID" value="NC_008829.1"/>
</dbReference>
<dbReference type="SMR" id="A2T356"/>
<dbReference type="GeneID" id="4788194"/>
<dbReference type="GO" id="GO:0009507">
    <property type="term" value="C:chloroplast"/>
    <property type="evidence" value="ECO:0007669"/>
    <property type="project" value="UniProtKB-SubCell"/>
</dbReference>
<dbReference type="GO" id="GO:1990904">
    <property type="term" value="C:ribonucleoprotein complex"/>
    <property type="evidence" value="ECO:0007669"/>
    <property type="project" value="UniProtKB-KW"/>
</dbReference>
<dbReference type="GO" id="GO:0005840">
    <property type="term" value="C:ribosome"/>
    <property type="evidence" value="ECO:0007669"/>
    <property type="project" value="UniProtKB-KW"/>
</dbReference>
<dbReference type="GO" id="GO:0019843">
    <property type="term" value="F:rRNA binding"/>
    <property type="evidence" value="ECO:0007669"/>
    <property type="project" value="UniProtKB-UniRule"/>
</dbReference>
<dbReference type="GO" id="GO:0003735">
    <property type="term" value="F:structural constituent of ribosome"/>
    <property type="evidence" value="ECO:0007669"/>
    <property type="project" value="InterPro"/>
</dbReference>
<dbReference type="GO" id="GO:0000027">
    <property type="term" value="P:ribosomal large subunit assembly"/>
    <property type="evidence" value="ECO:0007669"/>
    <property type="project" value="UniProtKB-UniRule"/>
</dbReference>
<dbReference type="GO" id="GO:0006412">
    <property type="term" value="P:translation"/>
    <property type="evidence" value="ECO:0007669"/>
    <property type="project" value="InterPro"/>
</dbReference>
<dbReference type="CDD" id="cd07026">
    <property type="entry name" value="Ribosomal_L20"/>
    <property type="match status" value="1"/>
</dbReference>
<dbReference type="FunFam" id="1.10.1900.20:FF:000001">
    <property type="entry name" value="50S ribosomal protein L20"/>
    <property type="match status" value="1"/>
</dbReference>
<dbReference type="Gene3D" id="6.10.160.10">
    <property type="match status" value="1"/>
</dbReference>
<dbReference type="Gene3D" id="1.10.1900.20">
    <property type="entry name" value="Ribosomal protein L20"/>
    <property type="match status" value="1"/>
</dbReference>
<dbReference type="HAMAP" id="MF_00382">
    <property type="entry name" value="Ribosomal_bL20"/>
    <property type="match status" value="1"/>
</dbReference>
<dbReference type="InterPro" id="IPR005813">
    <property type="entry name" value="Ribosomal_bL20"/>
</dbReference>
<dbReference type="InterPro" id="IPR049946">
    <property type="entry name" value="RIBOSOMAL_L20_CS"/>
</dbReference>
<dbReference type="InterPro" id="IPR035566">
    <property type="entry name" value="Ribosomal_protein_bL20_C"/>
</dbReference>
<dbReference type="NCBIfam" id="TIGR01032">
    <property type="entry name" value="rplT_bact"/>
    <property type="match status" value="1"/>
</dbReference>
<dbReference type="PANTHER" id="PTHR10986">
    <property type="entry name" value="39S RIBOSOMAL PROTEIN L20"/>
    <property type="match status" value="1"/>
</dbReference>
<dbReference type="Pfam" id="PF00453">
    <property type="entry name" value="Ribosomal_L20"/>
    <property type="match status" value="1"/>
</dbReference>
<dbReference type="PRINTS" id="PR00062">
    <property type="entry name" value="RIBOSOMALL20"/>
</dbReference>
<dbReference type="SUPFAM" id="SSF74731">
    <property type="entry name" value="Ribosomal protein L20"/>
    <property type="match status" value="1"/>
</dbReference>
<dbReference type="PROSITE" id="PS00937">
    <property type="entry name" value="RIBOSOMAL_L20"/>
    <property type="match status" value="1"/>
</dbReference>
<gene>
    <name evidence="1" type="primary">rpl20</name>
</gene>
<feature type="chain" id="PRO_0000355486" description="Large ribosomal subunit protein bL20c">
    <location>
        <begin position="1"/>
        <end position="115"/>
    </location>
</feature>
<reference key="1">
    <citation type="journal article" date="2007" name="Am. Fern J.">
        <title>The complete plastid genome sequence of Angiopteris evecta (G. Forst.) Hoffm. (Marattiaceae).</title>
        <authorList>
            <person name="Roper J.M."/>
            <person name="Hansen S.K."/>
            <person name="Wolf P.G."/>
            <person name="Karol K.G."/>
            <person name="Mandoli D.F."/>
            <person name="Everett K.D.E."/>
            <person name="Kuehl J."/>
            <person name="Boore J.L."/>
        </authorList>
    </citation>
    <scope>NUCLEOTIDE SEQUENCE [LARGE SCALE GENOMIC DNA]</scope>
</reference>
<proteinExistence type="inferred from homology"/>
<comment type="function">
    <text evidence="1">Binds directly to 23S ribosomal RNA and is necessary for the in vitro assembly process of the 50S ribosomal subunit. It is not involved in the protein synthesizing functions of that subunit.</text>
</comment>
<comment type="subcellular location">
    <subcellularLocation>
        <location>Plastid</location>
        <location>Chloroplast</location>
    </subcellularLocation>
</comment>
<comment type="similarity">
    <text evidence="1">Belongs to the bacterial ribosomal protein bL20 family.</text>
</comment>
<keyword id="KW-0150">Chloroplast</keyword>
<keyword id="KW-0934">Plastid</keyword>
<keyword id="KW-0687">Ribonucleoprotein</keyword>
<keyword id="KW-0689">Ribosomal protein</keyword>
<keyword id="KW-0694">RNA-binding</keyword>
<keyword id="KW-0699">rRNA-binding</keyword>
<sequence>MTRVKRGYVARKHRKNILKFTSGFQGAHSKLFRTANQQKMKALAYAQRDRNNRKRDIRRLWITRINAACRNNGIVYNGIIHSMSEKKVHLNRKILAQIAILDSNSFFGIVKEIGM</sequence>
<protein>
    <recommendedName>
        <fullName evidence="1">Large ribosomal subunit protein bL20c</fullName>
    </recommendedName>
    <alternativeName>
        <fullName evidence="2">50S ribosomal protein L20, chloroplastic</fullName>
    </alternativeName>
</protein>
<evidence type="ECO:0000255" key="1">
    <source>
        <dbReference type="HAMAP-Rule" id="MF_00382"/>
    </source>
</evidence>
<evidence type="ECO:0000305" key="2"/>
<name>RK20_ANGEV</name>
<geneLocation type="chloroplast"/>